<proteinExistence type="inferred from homology"/>
<comment type="function">
    <text evidence="1">Binds directly to 23S rRNA. The L1 stalk is quite mobile in the ribosome, and is involved in E site tRNA release.</text>
</comment>
<comment type="function">
    <text evidence="1">Protein L1 is also a translational repressor protein, it controls the translation of the L11 operon by binding to its mRNA.</text>
</comment>
<comment type="subunit">
    <text evidence="1">Part of the 50S ribosomal subunit.</text>
</comment>
<comment type="similarity">
    <text evidence="1">Belongs to the universal ribosomal protein uL1 family.</text>
</comment>
<feature type="chain" id="PRO_0000230623" description="Large ribosomal subunit protein uL1">
    <location>
        <begin position="1"/>
        <end position="235"/>
    </location>
</feature>
<accession>Q31CX8</accession>
<evidence type="ECO:0000255" key="1">
    <source>
        <dbReference type="HAMAP-Rule" id="MF_01318"/>
    </source>
</evidence>
<evidence type="ECO:0000305" key="2"/>
<sequence length="235" mass="25642">MKKLSKRMAALSTKIEDRIYPPLEALSIIKENANAKFDETIEAHIRLGIDPKYTDQQLRTTVALPHGTGQSIKIAVITSGENVSKAKSAGADLFGEEDLVESINKGNMDFDLLIATPDMMPKVAKLGRVLGPRGLMPNPKAGTVTNDIANAIKEFKAGKLEFRADKAGIVHVRFGKASFTKEALFDNLKTLQESIDKNKPSGSKGKYWKSFYVTSTMGPSVQVDISAVQDYQPEG</sequence>
<dbReference type="EMBL" id="CP000111">
    <property type="protein sequence ID" value="ABB49267.1"/>
    <property type="molecule type" value="Genomic_DNA"/>
</dbReference>
<dbReference type="RefSeq" id="WP_011375771.1">
    <property type="nucleotide sequence ID" value="NC_007577.1"/>
</dbReference>
<dbReference type="SMR" id="Q31CX8"/>
<dbReference type="STRING" id="74546.PMT9312_0205"/>
<dbReference type="KEGG" id="pmi:PMT9312_0205"/>
<dbReference type="eggNOG" id="COG0081">
    <property type="taxonomic scope" value="Bacteria"/>
</dbReference>
<dbReference type="HOGENOM" id="CLU_062853_0_0_3"/>
<dbReference type="OrthoDB" id="9803740at2"/>
<dbReference type="Proteomes" id="UP000002715">
    <property type="component" value="Chromosome"/>
</dbReference>
<dbReference type="GO" id="GO:0015934">
    <property type="term" value="C:large ribosomal subunit"/>
    <property type="evidence" value="ECO:0007669"/>
    <property type="project" value="InterPro"/>
</dbReference>
<dbReference type="GO" id="GO:0019843">
    <property type="term" value="F:rRNA binding"/>
    <property type="evidence" value="ECO:0007669"/>
    <property type="project" value="UniProtKB-UniRule"/>
</dbReference>
<dbReference type="GO" id="GO:0003735">
    <property type="term" value="F:structural constituent of ribosome"/>
    <property type="evidence" value="ECO:0007669"/>
    <property type="project" value="InterPro"/>
</dbReference>
<dbReference type="GO" id="GO:0000049">
    <property type="term" value="F:tRNA binding"/>
    <property type="evidence" value="ECO:0007669"/>
    <property type="project" value="UniProtKB-KW"/>
</dbReference>
<dbReference type="GO" id="GO:0006417">
    <property type="term" value="P:regulation of translation"/>
    <property type="evidence" value="ECO:0007669"/>
    <property type="project" value="UniProtKB-KW"/>
</dbReference>
<dbReference type="GO" id="GO:0006412">
    <property type="term" value="P:translation"/>
    <property type="evidence" value="ECO:0007669"/>
    <property type="project" value="UniProtKB-UniRule"/>
</dbReference>
<dbReference type="CDD" id="cd00403">
    <property type="entry name" value="Ribosomal_L1"/>
    <property type="match status" value="1"/>
</dbReference>
<dbReference type="FunFam" id="3.40.50.790:FF:000001">
    <property type="entry name" value="50S ribosomal protein L1"/>
    <property type="match status" value="1"/>
</dbReference>
<dbReference type="Gene3D" id="3.30.190.20">
    <property type="match status" value="1"/>
</dbReference>
<dbReference type="Gene3D" id="3.40.50.790">
    <property type="match status" value="1"/>
</dbReference>
<dbReference type="HAMAP" id="MF_01318_B">
    <property type="entry name" value="Ribosomal_uL1_B"/>
    <property type="match status" value="1"/>
</dbReference>
<dbReference type="InterPro" id="IPR005878">
    <property type="entry name" value="Ribosom_uL1_bac-type"/>
</dbReference>
<dbReference type="InterPro" id="IPR002143">
    <property type="entry name" value="Ribosomal_uL1"/>
</dbReference>
<dbReference type="InterPro" id="IPR023674">
    <property type="entry name" value="Ribosomal_uL1-like"/>
</dbReference>
<dbReference type="InterPro" id="IPR028364">
    <property type="entry name" value="Ribosomal_uL1/biogenesis"/>
</dbReference>
<dbReference type="InterPro" id="IPR016095">
    <property type="entry name" value="Ribosomal_uL1_3-a/b-sand"/>
</dbReference>
<dbReference type="InterPro" id="IPR023673">
    <property type="entry name" value="Ribosomal_uL1_CS"/>
</dbReference>
<dbReference type="NCBIfam" id="TIGR01169">
    <property type="entry name" value="rplA_bact"/>
    <property type="match status" value="1"/>
</dbReference>
<dbReference type="PANTHER" id="PTHR36427">
    <property type="entry name" value="54S RIBOSOMAL PROTEIN L1, MITOCHONDRIAL"/>
    <property type="match status" value="1"/>
</dbReference>
<dbReference type="PANTHER" id="PTHR36427:SF3">
    <property type="entry name" value="LARGE RIBOSOMAL SUBUNIT PROTEIN UL1M"/>
    <property type="match status" value="1"/>
</dbReference>
<dbReference type="Pfam" id="PF00687">
    <property type="entry name" value="Ribosomal_L1"/>
    <property type="match status" value="1"/>
</dbReference>
<dbReference type="PIRSF" id="PIRSF002155">
    <property type="entry name" value="Ribosomal_L1"/>
    <property type="match status" value="1"/>
</dbReference>
<dbReference type="SUPFAM" id="SSF56808">
    <property type="entry name" value="Ribosomal protein L1"/>
    <property type="match status" value="1"/>
</dbReference>
<dbReference type="PROSITE" id="PS01199">
    <property type="entry name" value="RIBOSOMAL_L1"/>
    <property type="match status" value="1"/>
</dbReference>
<gene>
    <name evidence="1" type="primary">rplA</name>
    <name evidence="1" type="synonym">rpl1</name>
    <name type="ordered locus">PMT9312_0205</name>
</gene>
<protein>
    <recommendedName>
        <fullName evidence="1">Large ribosomal subunit protein uL1</fullName>
    </recommendedName>
    <alternativeName>
        <fullName evidence="2">50S ribosomal protein L1</fullName>
    </alternativeName>
</protein>
<reference key="1">
    <citation type="journal article" date="2006" name="Science">
        <title>Genomic islands and the ecology and evolution of Prochlorococcus.</title>
        <authorList>
            <person name="Coleman M.L."/>
            <person name="Sullivan M.B."/>
            <person name="Martiny A.C."/>
            <person name="Steglich C."/>
            <person name="Barry K."/>
            <person name="Delong E.F."/>
            <person name="Chisholm S.W."/>
        </authorList>
    </citation>
    <scope>NUCLEOTIDE SEQUENCE [LARGE SCALE GENOMIC DNA]</scope>
    <source>
        <strain>MIT 9312</strain>
    </source>
</reference>
<organism>
    <name type="scientific">Prochlorococcus marinus (strain MIT 9312)</name>
    <dbReference type="NCBI Taxonomy" id="74546"/>
    <lineage>
        <taxon>Bacteria</taxon>
        <taxon>Bacillati</taxon>
        <taxon>Cyanobacteriota</taxon>
        <taxon>Cyanophyceae</taxon>
        <taxon>Synechococcales</taxon>
        <taxon>Prochlorococcaceae</taxon>
        <taxon>Prochlorococcus</taxon>
    </lineage>
</organism>
<keyword id="KW-0678">Repressor</keyword>
<keyword id="KW-0687">Ribonucleoprotein</keyword>
<keyword id="KW-0689">Ribosomal protein</keyword>
<keyword id="KW-0694">RNA-binding</keyword>
<keyword id="KW-0699">rRNA-binding</keyword>
<keyword id="KW-0810">Translation regulation</keyword>
<keyword id="KW-0820">tRNA-binding</keyword>
<name>RL1_PROM9</name>